<keyword id="KW-0489">Methyltransferase</keyword>
<keyword id="KW-0949">S-adenosyl-L-methionine</keyword>
<keyword id="KW-0808">Transferase</keyword>
<keyword id="KW-0819">tRNA processing</keyword>
<gene>
    <name evidence="1" type="primary">trmA</name>
    <name type="ordered locus">SPC_4237</name>
</gene>
<comment type="function">
    <text evidence="1">Dual-specificity methyltransferase that catalyzes the formation of 5-methyluridine at position 54 (m5U54) in all tRNAs, and that of position 341 (m5U341) in tmRNA (transfer-mRNA).</text>
</comment>
<comment type="catalytic activity">
    <reaction evidence="1">
        <text>uridine(54) in tRNA + S-adenosyl-L-methionine = 5-methyluridine(54) in tRNA + S-adenosyl-L-homocysteine + H(+)</text>
        <dbReference type="Rhea" id="RHEA:42712"/>
        <dbReference type="Rhea" id="RHEA-COMP:10167"/>
        <dbReference type="Rhea" id="RHEA-COMP:10193"/>
        <dbReference type="ChEBI" id="CHEBI:15378"/>
        <dbReference type="ChEBI" id="CHEBI:57856"/>
        <dbReference type="ChEBI" id="CHEBI:59789"/>
        <dbReference type="ChEBI" id="CHEBI:65315"/>
        <dbReference type="ChEBI" id="CHEBI:74447"/>
        <dbReference type="EC" id="2.1.1.35"/>
    </reaction>
</comment>
<comment type="catalytic activity">
    <reaction evidence="1">
        <text>uridine(341) in tmRNA + S-adenosyl-L-methionine = 5-methyluridine(341) in tmRNA + S-adenosyl-L-homocysteine + H(+)</text>
        <dbReference type="Rhea" id="RHEA:43612"/>
        <dbReference type="Rhea" id="RHEA-COMP:10630"/>
        <dbReference type="Rhea" id="RHEA-COMP:10631"/>
        <dbReference type="ChEBI" id="CHEBI:15378"/>
        <dbReference type="ChEBI" id="CHEBI:57856"/>
        <dbReference type="ChEBI" id="CHEBI:59789"/>
        <dbReference type="ChEBI" id="CHEBI:65315"/>
        <dbReference type="ChEBI" id="CHEBI:74447"/>
    </reaction>
</comment>
<comment type="similarity">
    <text evidence="1">Belongs to the class I-like SAM-binding methyltransferase superfamily. RNA M5U methyltransferase family. TrmA subfamily.</text>
</comment>
<sequence>MTPEHLPTEQYEAQLAEKVARLQSMMAPFSGLVPEVFRSPVSHYRMRAEFRLWHDGDDLYHIMFDQQTKSRIRVDTFPAASQLINTLMKAMIAGVRDNHALRHKLFQIDYLTTLSNQAVVSLLYHKKLDEEWREAATALRDALRAQGLNVHLIGRATKTKIELDQDYIDERLPVAGKEIIYRQVENSFTQPNAAMNIQMLEWALEVTKDSKGDLLELYCGNGNFSLALTRNFNRVLATEIAKPSVAAAQYNIAANHIDNVQIIRMAAEEFTQAMNGVREFNRLQGIDLKRYQCETIFVDPPRSGLDSETEKMVQAYPRILYISCNPETLCKNLETLSQTHTVSRLALFDQFPYTHHMECGVLLTAR</sequence>
<name>TRMA_SALPC</name>
<proteinExistence type="inferred from homology"/>
<feature type="chain" id="PRO_1000148889" description="tRNA/tmRNA (uracil-C(5))-methyltransferase">
    <location>
        <begin position="1"/>
        <end position="366"/>
    </location>
</feature>
<feature type="active site" description="Nucleophile" evidence="1">
    <location>
        <position position="324"/>
    </location>
</feature>
<feature type="active site" description="Proton acceptor" evidence="1">
    <location>
        <position position="358"/>
    </location>
</feature>
<feature type="binding site" evidence="1">
    <location>
        <position position="190"/>
    </location>
    <ligand>
        <name>S-adenosyl-L-methionine</name>
        <dbReference type="ChEBI" id="CHEBI:59789"/>
    </ligand>
</feature>
<feature type="binding site" evidence="1">
    <location>
        <position position="218"/>
    </location>
    <ligand>
        <name>S-adenosyl-L-methionine</name>
        <dbReference type="ChEBI" id="CHEBI:59789"/>
    </ligand>
</feature>
<feature type="binding site" evidence="1">
    <location>
        <position position="223"/>
    </location>
    <ligand>
        <name>S-adenosyl-L-methionine</name>
        <dbReference type="ChEBI" id="CHEBI:59789"/>
    </ligand>
</feature>
<feature type="binding site" evidence="1">
    <location>
        <position position="239"/>
    </location>
    <ligand>
        <name>S-adenosyl-L-methionine</name>
        <dbReference type="ChEBI" id="CHEBI:59789"/>
    </ligand>
</feature>
<feature type="binding site" evidence="1">
    <location>
        <position position="299"/>
    </location>
    <ligand>
        <name>S-adenosyl-L-methionine</name>
        <dbReference type="ChEBI" id="CHEBI:59789"/>
    </ligand>
</feature>
<reference key="1">
    <citation type="journal article" date="2009" name="PLoS ONE">
        <title>Salmonella paratyphi C: genetic divergence from Salmonella choleraesuis and pathogenic convergence with Salmonella typhi.</title>
        <authorList>
            <person name="Liu W.-Q."/>
            <person name="Feng Y."/>
            <person name="Wang Y."/>
            <person name="Zou Q.-H."/>
            <person name="Chen F."/>
            <person name="Guo J.-T."/>
            <person name="Peng Y.-H."/>
            <person name="Jin Y."/>
            <person name="Li Y.-G."/>
            <person name="Hu S.-N."/>
            <person name="Johnston R.N."/>
            <person name="Liu G.-R."/>
            <person name="Liu S.-L."/>
        </authorList>
    </citation>
    <scope>NUCLEOTIDE SEQUENCE [LARGE SCALE GENOMIC DNA]</scope>
    <source>
        <strain>RKS4594</strain>
    </source>
</reference>
<organism>
    <name type="scientific">Salmonella paratyphi C (strain RKS4594)</name>
    <dbReference type="NCBI Taxonomy" id="476213"/>
    <lineage>
        <taxon>Bacteria</taxon>
        <taxon>Pseudomonadati</taxon>
        <taxon>Pseudomonadota</taxon>
        <taxon>Gammaproteobacteria</taxon>
        <taxon>Enterobacterales</taxon>
        <taxon>Enterobacteriaceae</taxon>
        <taxon>Salmonella</taxon>
    </lineage>
</organism>
<dbReference type="EC" id="2.1.1.-" evidence="1"/>
<dbReference type="EC" id="2.1.1.35" evidence="1"/>
<dbReference type="EMBL" id="CP000857">
    <property type="protein sequence ID" value="ACN48300.1"/>
    <property type="molecule type" value="Genomic_DNA"/>
</dbReference>
<dbReference type="RefSeq" id="WP_000186977.1">
    <property type="nucleotide sequence ID" value="NC_012125.1"/>
</dbReference>
<dbReference type="SMR" id="C0Q481"/>
<dbReference type="KEGG" id="sei:SPC_4237"/>
<dbReference type="HOGENOM" id="CLU_043022_0_0_6"/>
<dbReference type="Proteomes" id="UP000001599">
    <property type="component" value="Chromosome"/>
</dbReference>
<dbReference type="GO" id="GO:0005829">
    <property type="term" value="C:cytosol"/>
    <property type="evidence" value="ECO:0007669"/>
    <property type="project" value="TreeGrafter"/>
</dbReference>
<dbReference type="GO" id="GO:0019843">
    <property type="term" value="F:rRNA binding"/>
    <property type="evidence" value="ECO:0007669"/>
    <property type="project" value="TreeGrafter"/>
</dbReference>
<dbReference type="GO" id="GO:0030697">
    <property type="term" value="F:tRNA (uracil(54)-C5)-methyltransferase activity, S-adenosyl methionine-dependent"/>
    <property type="evidence" value="ECO:0007669"/>
    <property type="project" value="UniProtKB-UniRule"/>
</dbReference>
<dbReference type="GO" id="GO:0000049">
    <property type="term" value="F:tRNA binding"/>
    <property type="evidence" value="ECO:0007669"/>
    <property type="project" value="TreeGrafter"/>
</dbReference>
<dbReference type="GO" id="GO:0030488">
    <property type="term" value="P:tRNA methylation"/>
    <property type="evidence" value="ECO:0007669"/>
    <property type="project" value="UniProtKB-UniRule"/>
</dbReference>
<dbReference type="CDD" id="cd02440">
    <property type="entry name" value="AdoMet_MTases"/>
    <property type="match status" value="1"/>
</dbReference>
<dbReference type="FunFam" id="2.40.50.1070:FF:000001">
    <property type="entry name" value="tRNA/tmRNA (uracil-C(5))-methyltransferase"/>
    <property type="match status" value="1"/>
</dbReference>
<dbReference type="FunFam" id="3.40.50.150:FF:000012">
    <property type="entry name" value="tRNA/tmRNA (uracil-C(5))-methyltransferase"/>
    <property type="match status" value="1"/>
</dbReference>
<dbReference type="Gene3D" id="2.40.50.1070">
    <property type="match status" value="1"/>
</dbReference>
<dbReference type="Gene3D" id="3.40.50.150">
    <property type="entry name" value="Vaccinia Virus protein VP39"/>
    <property type="match status" value="1"/>
</dbReference>
<dbReference type="HAMAP" id="MF_01011">
    <property type="entry name" value="RNA_methyltr_TrmA"/>
    <property type="match status" value="1"/>
</dbReference>
<dbReference type="InterPro" id="IPR030390">
    <property type="entry name" value="MeTrfase_TrmA_AS"/>
</dbReference>
<dbReference type="InterPro" id="IPR030391">
    <property type="entry name" value="MeTrfase_TrmA_CS"/>
</dbReference>
<dbReference type="InterPro" id="IPR029063">
    <property type="entry name" value="SAM-dependent_MTases_sf"/>
</dbReference>
<dbReference type="InterPro" id="IPR011869">
    <property type="entry name" value="TrmA_MeTrfase"/>
</dbReference>
<dbReference type="InterPro" id="IPR010280">
    <property type="entry name" value="U5_MeTrfase_fam"/>
</dbReference>
<dbReference type="NCBIfam" id="TIGR02143">
    <property type="entry name" value="trmA_only"/>
    <property type="match status" value="1"/>
</dbReference>
<dbReference type="PANTHER" id="PTHR47790">
    <property type="entry name" value="TRNA/TMRNA (URACIL-C(5))-METHYLTRANSFERASE"/>
    <property type="match status" value="1"/>
</dbReference>
<dbReference type="PANTHER" id="PTHR47790:SF2">
    <property type="entry name" value="TRNA_TMRNA (URACIL-C(5))-METHYLTRANSFERASE"/>
    <property type="match status" value="1"/>
</dbReference>
<dbReference type="Pfam" id="PF05958">
    <property type="entry name" value="tRNA_U5-meth_tr"/>
    <property type="match status" value="1"/>
</dbReference>
<dbReference type="SUPFAM" id="SSF53335">
    <property type="entry name" value="S-adenosyl-L-methionine-dependent methyltransferases"/>
    <property type="match status" value="1"/>
</dbReference>
<dbReference type="PROSITE" id="PS51687">
    <property type="entry name" value="SAM_MT_RNA_M5U"/>
    <property type="match status" value="1"/>
</dbReference>
<dbReference type="PROSITE" id="PS01230">
    <property type="entry name" value="TRMA_1"/>
    <property type="match status" value="1"/>
</dbReference>
<dbReference type="PROSITE" id="PS01231">
    <property type="entry name" value="TRMA_2"/>
    <property type="match status" value="1"/>
</dbReference>
<accession>C0Q481</accession>
<protein>
    <recommendedName>
        <fullName evidence="1">tRNA/tmRNA (uracil-C(5))-methyltransferase</fullName>
        <ecNumber evidence="1">2.1.1.-</ecNumber>
        <ecNumber evidence="1">2.1.1.35</ecNumber>
    </recommendedName>
    <alternativeName>
        <fullName evidence="1">tRNA (uracil(54)-C(5))-methyltransferase</fullName>
    </alternativeName>
    <alternativeName>
        <fullName evidence="1">tRNA(m5U54)-methyltransferase</fullName>
        <shortName evidence="1">RUMT</shortName>
    </alternativeName>
    <alternativeName>
        <fullName evidence="1">tmRNA (uracil(341)-C(5))-methyltransferase</fullName>
    </alternativeName>
</protein>
<evidence type="ECO:0000255" key="1">
    <source>
        <dbReference type="HAMAP-Rule" id="MF_01011"/>
    </source>
</evidence>